<protein>
    <recommendedName>
        <fullName>Transcriptional regulator MraZ</fullName>
    </recommendedName>
</protein>
<proteinExistence type="inferred from homology"/>
<evidence type="ECO:0000255" key="1">
    <source>
        <dbReference type="HAMAP-Rule" id="MF_01008"/>
    </source>
</evidence>
<evidence type="ECO:0000255" key="2">
    <source>
        <dbReference type="PROSITE-ProRule" id="PRU01076"/>
    </source>
</evidence>
<organism>
    <name type="scientific">Desulforamulus reducens (strain ATCC BAA-1160 / DSM 100696 / MI-1)</name>
    <name type="common">Desulfotomaculum reducens</name>
    <dbReference type="NCBI Taxonomy" id="349161"/>
    <lineage>
        <taxon>Bacteria</taxon>
        <taxon>Bacillati</taxon>
        <taxon>Bacillota</taxon>
        <taxon>Clostridia</taxon>
        <taxon>Eubacteriales</taxon>
        <taxon>Peptococcaceae</taxon>
        <taxon>Desulforamulus</taxon>
    </lineage>
</organism>
<dbReference type="EMBL" id="CP000612">
    <property type="protein sequence ID" value="ABO49205.1"/>
    <property type="molecule type" value="Genomic_DNA"/>
</dbReference>
<dbReference type="RefSeq" id="WP_011877041.1">
    <property type="nucleotide sequence ID" value="NC_009253.1"/>
</dbReference>
<dbReference type="SMR" id="A4J2A2"/>
<dbReference type="STRING" id="349161.Dred_0666"/>
<dbReference type="KEGG" id="drm:Dred_0666"/>
<dbReference type="eggNOG" id="COG2001">
    <property type="taxonomic scope" value="Bacteria"/>
</dbReference>
<dbReference type="HOGENOM" id="CLU_107907_0_5_9"/>
<dbReference type="OrthoDB" id="9807753at2"/>
<dbReference type="Proteomes" id="UP000001556">
    <property type="component" value="Chromosome"/>
</dbReference>
<dbReference type="GO" id="GO:0005737">
    <property type="term" value="C:cytoplasm"/>
    <property type="evidence" value="ECO:0007669"/>
    <property type="project" value="UniProtKB-UniRule"/>
</dbReference>
<dbReference type="GO" id="GO:0009295">
    <property type="term" value="C:nucleoid"/>
    <property type="evidence" value="ECO:0007669"/>
    <property type="project" value="UniProtKB-SubCell"/>
</dbReference>
<dbReference type="GO" id="GO:0003700">
    <property type="term" value="F:DNA-binding transcription factor activity"/>
    <property type="evidence" value="ECO:0007669"/>
    <property type="project" value="UniProtKB-UniRule"/>
</dbReference>
<dbReference type="GO" id="GO:0000976">
    <property type="term" value="F:transcription cis-regulatory region binding"/>
    <property type="evidence" value="ECO:0007669"/>
    <property type="project" value="TreeGrafter"/>
</dbReference>
<dbReference type="GO" id="GO:2000143">
    <property type="term" value="P:negative regulation of DNA-templated transcription initiation"/>
    <property type="evidence" value="ECO:0007669"/>
    <property type="project" value="TreeGrafter"/>
</dbReference>
<dbReference type="CDD" id="cd16321">
    <property type="entry name" value="MraZ_C"/>
    <property type="match status" value="1"/>
</dbReference>
<dbReference type="CDD" id="cd16320">
    <property type="entry name" value="MraZ_N"/>
    <property type="match status" value="1"/>
</dbReference>
<dbReference type="FunFam" id="3.40.1550.20:FF:000002">
    <property type="entry name" value="Transcriptional regulator MraZ"/>
    <property type="match status" value="1"/>
</dbReference>
<dbReference type="Gene3D" id="3.40.1550.20">
    <property type="entry name" value="Transcriptional regulator MraZ domain"/>
    <property type="match status" value="1"/>
</dbReference>
<dbReference type="HAMAP" id="MF_01008">
    <property type="entry name" value="MraZ"/>
    <property type="match status" value="1"/>
</dbReference>
<dbReference type="InterPro" id="IPR003444">
    <property type="entry name" value="MraZ"/>
</dbReference>
<dbReference type="InterPro" id="IPR035644">
    <property type="entry name" value="MraZ_C"/>
</dbReference>
<dbReference type="InterPro" id="IPR020603">
    <property type="entry name" value="MraZ_dom"/>
</dbReference>
<dbReference type="InterPro" id="IPR035642">
    <property type="entry name" value="MraZ_N"/>
</dbReference>
<dbReference type="InterPro" id="IPR038619">
    <property type="entry name" value="MraZ_sf"/>
</dbReference>
<dbReference type="InterPro" id="IPR007159">
    <property type="entry name" value="SpoVT-AbrB_dom"/>
</dbReference>
<dbReference type="InterPro" id="IPR037914">
    <property type="entry name" value="SpoVT-AbrB_sf"/>
</dbReference>
<dbReference type="NCBIfam" id="TIGR00242">
    <property type="entry name" value="division/cell wall cluster transcriptional repressor MraZ"/>
    <property type="match status" value="1"/>
</dbReference>
<dbReference type="PANTHER" id="PTHR34701">
    <property type="entry name" value="TRANSCRIPTIONAL REGULATOR MRAZ"/>
    <property type="match status" value="1"/>
</dbReference>
<dbReference type="PANTHER" id="PTHR34701:SF1">
    <property type="entry name" value="TRANSCRIPTIONAL REGULATOR MRAZ"/>
    <property type="match status" value="1"/>
</dbReference>
<dbReference type="Pfam" id="PF02381">
    <property type="entry name" value="MraZ"/>
    <property type="match status" value="2"/>
</dbReference>
<dbReference type="SUPFAM" id="SSF89447">
    <property type="entry name" value="AbrB/MazE/MraZ-like"/>
    <property type="match status" value="1"/>
</dbReference>
<dbReference type="PROSITE" id="PS51740">
    <property type="entry name" value="SPOVT_ABRB"/>
    <property type="match status" value="2"/>
</dbReference>
<comment type="subunit">
    <text evidence="1">Forms oligomers.</text>
</comment>
<comment type="subcellular location">
    <subcellularLocation>
        <location evidence="1">Cytoplasm</location>
        <location evidence="1">Nucleoid</location>
    </subcellularLocation>
</comment>
<comment type="similarity">
    <text evidence="1">Belongs to the MraZ family.</text>
</comment>
<name>MRAZ_DESRM</name>
<keyword id="KW-0963">Cytoplasm</keyword>
<keyword id="KW-0238">DNA-binding</keyword>
<keyword id="KW-1185">Reference proteome</keyword>
<keyword id="KW-0677">Repeat</keyword>
<keyword id="KW-0804">Transcription</keyword>
<keyword id="KW-0805">Transcription regulation</keyword>
<feature type="chain" id="PRO_1000072900" description="Transcriptional regulator MraZ">
    <location>
        <begin position="1"/>
        <end position="142"/>
    </location>
</feature>
<feature type="domain" description="SpoVT-AbrB 1" evidence="2">
    <location>
        <begin position="5"/>
        <end position="47"/>
    </location>
</feature>
<feature type="domain" description="SpoVT-AbrB 2" evidence="2">
    <location>
        <begin position="76"/>
        <end position="119"/>
    </location>
</feature>
<accession>A4J2A2</accession>
<sequence length="142" mass="16477">MFMGEFQHNIDSKGRLIVPARFREGLGDRFIVTKGLDNCLFVYPQHEWAEVEQKLKSLPFTRADARAFVRFFFSGATECEVDKQGRILLPNNLREYAKLDKETVVVGVSTRVEIWSKEEWDRYNAQAEASFEQLAENIVDLL</sequence>
<gene>
    <name evidence="1" type="primary">mraZ</name>
    <name type="ordered locus">Dred_0666</name>
</gene>
<reference key="1">
    <citation type="submission" date="2007-03" db="EMBL/GenBank/DDBJ databases">
        <title>Complete sequence of Desulfotomaculum reducens MI-1.</title>
        <authorList>
            <consortium name="US DOE Joint Genome Institute"/>
            <person name="Copeland A."/>
            <person name="Lucas S."/>
            <person name="Lapidus A."/>
            <person name="Barry K."/>
            <person name="Detter J.C."/>
            <person name="Glavina del Rio T."/>
            <person name="Hammon N."/>
            <person name="Israni S."/>
            <person name="Dalin E."/>
            <person name="Tice H."/>
            <person name="Pitluck S."/>
            <person name="Sims D."/>
            <person name="Brettin T."/>
            <person name="Bruce D."/>
            <person name="Han C."/>
            <person name="Tapia R."/>
            <person name="Schmutz J."/>
            <person name="Larimer F."/>
            <person name="Land M."/>
            <person name="Hauser L."/>
            <person name="Kyrpides N."/>
            <person name="Kim E."/>
            <person name="Tebo B.M."/>
            <person name="Richardson P."/>
        </authorList>
    </citation>
    <scope>NUCLEOTIDE SEQUENCE [LARGE SCALE GENOMIC DNA]</scope>
    <source>
        <strain>ATCC BAA-1160 / DSM 100696 / MI-1</strain>
    </source>
</reference>